<dbReference type="EC" id="2.1.1.177" evidence="1"/>
<dbReference type="EMBL" id="CP000127">
    <property type="protein sequence ID" value="ABA59112.1"/>
    <property type="molecule type" value="Genomic_DNA"/>
</dbReference>
<dbReference type="RefSeq" id="WP_002812982.1">
    <property type="nucleotide sequence ID" value="NC_007484.1"/>
</dbReference>
<dbReference type="SMR" id="Q3J7T4"/>
<dbReference type="FunCoup" id="Q3J7T4">
    <property type="interactions" value="364"/>
</dbReference>
<dbReference type="STRING" id="323261.Noc_2659"/>
<dbReference type="KEGG" id="noc:Noc_2659"/>
<dbReference type="eggNOG" id="COG1576">
    <property type="taxonomic scope" value="Bacteria"/>
</dbReference>
<dbReference type="HOGENOM" id="CLU_100552_1_0_6"/>
<dbReference type="InParanoid" id="Q3J7T4"/>
<dbReference type="Proteomes" id="UP000006838">
    <property type="component" value="Chromosome"/>
</dbReference>
<dbReference type="GO" id="GO:0005737">
    <property type="term" value="C:cytoplasm"/>
    <property type="evidence" value="ECO:0007669"/>
    <property type="project" value="UniProtKB-SubCell"/>
</dbReference>
<dbReference type="GO" id="GO:0070038">
    <property type="term" value="F:rRNA (pseudouridine-N3-)-methyltransferase activity"/>
    <property type="evidence" value="ECO:0007669"/>
    <property type="project" value="UniProtKB-UniRule"/>
</dbReference>
<dbReference type="CDD" id="cd18081">
    <property type="entry name" value="RlmH-like"/>
    <property type="match status" value="1"/>
</dbReference>
<dbReference type="Gene3D" id="3.40.1280.10">
    <property type="match status" value="1"/>
</dbReference>
<dbReference type="HAMAP" id="MF_00658">
    <property type="entry name" value="23SrRNA_methyltr_H"/>
    <property type="match status" value="1"/>
</dbReference>
<dbReference type="InterPro" id="IPR029028">
    <property type="entry name" value="Alpha/beta_knot_MTases"/>
</dbReference>
<dbReference type="InterPro" id="IPR003742">
    <property type="entry name" value="RlmH-like"/>
</dbReference>
<dbReference type="InterPro" id="IPR029026">
    <property type="entry name" value="tRNA_m1G_MTases_N"/>
</dbReference>
<dbReference type="NCBIfam" id="NF000986">
    <property type="entry name" value="PRK00103.1-4"/>
    <property type="match status" value="1"/>
</dbReference>
<dbReference type="NCBIfam" id="TIGR00246">
    <property type="entry name" value="tRNA_RlmH_YbeA"/>
    <property type="match status" value="1"/>
</dbReference>
<dbReference type="PANTHER" id="PTHR33603">
    <property type="entry name" value="METHYLTRANSFERASE"/>
    <property type="match status" value="1"/>
</dbReference>
<dbReference type="PANTHER" id="PTHR33603:SF1">
    <property type="entry name" value="RIBOSOMAL RNA LARGE SUBUNIT METHYLTRANSFERASE H"/>
    <property type="match status" value="1"/>
</dbReference>
<dbReference type="Pfam" id="PF02590">
    <property type="entry name" value="SPOUT_MTase"/>
    <property type="match status" value="1"/>
</dbReference>
<dbReference type="PIRSF" id="PIRSF004505">
    <property type="entry name" value="MT_bac"/>
    <property type="match status" value="1"/>
</dbReference>
<dbReference type="SUPFAM" id="SSF75217">
    <property type="entry name" value="alpha/beta knot"/>
    <property type="match status" value="1"/>
</dbReference>
<protein>
    <recommendedName>
        <fullName evidence="1">Ribosomal RNA large subunit methyltransferase H</fullName>
        <ecNumber evidence="1">2.1.1.177</ecNumber>
    </recommendedName>
    <alternativeName>
        <fullName evidence="1">23S rRNA (pseudouridine1915-N3)-methyltransferase</fullName>
    </alternativeName>
    <alternativeName>
        <fullName evidence="1">23S rRNA m3Psi1915 methyltransferase</fullName>
    </alternativeName>
    <alternativeName>
        <fullName evidence="1">rRNA (pseudouridine-N3-)-methyltransferase RlmH</fullName>
    </alternativeName>
</protein>
<name>RLMH_NITOC</name>
<sequence length="157" mass="17723">MNIYVIAVGQRLPRWIGEGYQEYAQRLPRQCSLSLVEIAPARRGKSGHPTQWRQDECRRLLAAVPPNSKVIACDERGQSWSTEEVARRLQIWMNEGQDVVLLIGGPDGLAPLCLEQATGLWSLSSLTLPHGLVRVILAEQIYRAFSLLNRHPYHRAS</sequence>
<gene>
    <name evidence="1" type="primary">rlmH</name>
    <name type="ordered locus">Noc_2659</name>
</gene>
<accession>Q3J7T4</accession>
<feature type="chain" id="PRO_0000260577" description="Ribosomal RNA large subunit methyltransferase H">
    <location>
        <begin position="1"/>
        <end position="157"/>
    </location>
</feature>
<feature type="binding site" evidence="1">
    <location>
        <position position="104"/>
    </location>
    <ligand>
        <name>S-adenosyl-L-methionine</name>
        <dbReference type="ChEBI" id="CHEBI:59789"/>
    </ligand>
</feature>
<feature type="binding site" evidence="1">
    <location>
        <begin position="123"/>
        <end position="128"/>
    </location>
    <ligand>
        <name>S-adenosyl-L-methionine</name>
        <dbReference type="ChEBI" id="CHEBI:59789"/>
    </ligand>
</feature>
<evidence type="ECO:0000255" key="1">
    <source>
        <dbReference type="HAMAP-Rule" id="MF_00658"/>
    </source>
</evidence>
<organism>
    <name type="scientific">Nitrosococcus oceani (strain ATCC 19707 / BCRC 17464 / JCM 30415 / NCIMB 11848 / C-107)</name>
    <dbReference type="NCBI Taxonomy" id="323261"/>
    <lineage>
        <taxon>Bacteria</taxon>
        <taxon>Pseudomonadati</taxon>
        <taxon>Pseudomonadota</taxon>
        <taxon>Gammaproteobacteria</taxon>
        <taxon>Chromatiales</taxon>
        <taxon>Chromatiaceae</taxon>
        <taxon>Nitrosococcus</taxon>
    </lineage>
</organism>
<reference key="1">
    <citation type="journal article" date="2006" name="Appl. Environ. Microbiol.">
        <title>Complete genome sequence of the marine, chemolithoautotrophic, ammonia-oxidizing bacterium Nitrosococcus oceani ATCC 19707.</title>
        <authorList>
            <person name="Klotz M.G."/>
            <person name="Arp D.J."/>
            <person name="Chain P.S.G."/>
            <person name="El-Sheikh A.F."/>
            <person name="Hauser L.J."/>
            <person name="Hommes N.G."/>
            <person name="Larimer F.W."/>
            <person name="Malfatti S.A."/>
            <person name="Norton J.M."/>
            <person name="Poret-Peterson A.T."/>
            <person name="Vergez L.M."/>
            <person name="Ward B.B."/>
        </authorList>
    </citation>
    <scope>NUCLEOTIDE SEQUENCE [LARGE SCALE GENOMIC DNA]</scope>
    <source>
        <strain>ATCC 19707 / BCRC 17464 / JCM 30415 / NCIMB 11848 / C-107</strain>
    </source>
</reference>
<keyword id="KW-0963">Cytoplasm</keyword>
<keyword id="KW-0489">Methyltransferase</keyword>
<keyword id="KW-1185">Reference proteome</keyword>
<keyword id="KW-0698">rRNA processing</keyword>
<keyword id="KW-0949">S-adenosyl-L-methionine</keyword>
<keyword id="KW-0808">Transferase</keyword>
<comment type="function">
    <text evidence="1">Specifically methylates the pseudouridine at position 1915 (m3Psi1915) in 23S rRNA.</text>
</comment>
<comment type="catalytic activity">
    <reaction evidence="1">
        <text>pseudouridine(1915) in 23S rRNA + S-adenosyl-L-methionine = N(3)-methylpseudouridine(1915) in 23S rRNA + S-adenosyl-L-homocysteine + H(+)</text>
        <dbReference type="Rhea" id="RHEA:42752"/>
        <dbReference type="Rhea" id="RHEA-COMP:10221"/>
        <dbReference type="Rhea" id="RHEA-COMP:10222"/>
        <dbReference type="ChEBI" id="CHEBI:15378"/>
        <dbReference type="ChEBI" id="CHEBI:57856"/>
        <dbReference type="ChEBI" id="CHEBI:59789"/>
        <dbReference type="ChEBI" id="CHEBI:65314"/>
        <dbReference type="ChEBI" id="CHEBI:74486"/>
        <dbReference type="EC" id="2.1.1.177"/>
    </reaction>
</comment>
<comment type="subunit">
    <text evidence="1">Homodimer.</text>
</comment>
<comment type="subcellular location">
    <subcellularLocation>
        <location evidence="1">Cytoplasm</location>
    </subcellularLocation>
</comment>
<comment type="similarity">
    <text evidence="1">Belongs to the RNA methyltransferase RlmH family.</text>
</comment>
<proteinExistence type="inferred from homology"/>